<reference key="1">
    <citation type="submission" date="2007-02" db="EMBL/GenBank/DDBJ databases">
        <title>Complete sequence of chromosome of Yersinia pestis Pestoides F.</title>
        <authorList>
            <consortium name="US DOE Joint Genome Institute"/>
            <person name="Copeland A."/>
            <person name="Lucas S."/>
            <person name="Lapidus A."/>
            <person name="Barry K."/>
            <person name="Detter J.C."/>
            <person name="Glavina del Rio T."/>
            <person name="Hammon N."/>
            <person name="Israni S."/>
            <person name="Dalin E."/>
            <person name="Tice H."/>
            <person name="Pitluck S."/>
            <person name="Di Bartolo G."/>
            <person name="Chain P."/>
            <person name="Malfatti S."/>
            <person name="Shin M."/>
            <person name="Vergez L."/>
            <person name="Schmutz J."/>
            <person name="Larimer F."/>
            <person name="Land M."/>
            <person name="Hauser L."/>
            <person name="Worsham P."/>
            <person name="Chu M."/>
            <person name="Bearden S."/>
            <person name="Garcia E."/>
            <person name="Richardson P."/>
        </authorList>
    </citation>
    <scope>NUCLEOTIDE SEQUENCE [LARGE SCALE GENOMIC DNA]</scope>
    <source>
        <strain>Pestoides F</strain>
    </source>
</reference>
<comment type="catalytic activity">
    <reaction evidence="1">
        <text>(2R)-2-phosphoglycerate = (2R)-3-phosphoglycerate</text>
        <dbReference type="Rhea" id="RHEA:15901"/>
        <dbReference type="ChEBI" id="CHEBI:58272"/>
        <dbReference type="ChEBI" id="CHEBI:58289"/>
    </reaction>
</comment>
<comment type="pathway">
    <text evidence="1">Carbohydrate degradation; glycolysis; pyruvate from D-glyceraldehyde 3-phosphate: step 3/5.</text>
</comment>
<comment type="similarity">
    <text evidence="1">Belongs to the phosphoglycerate mutase family. GpmB subfamily.</text>
</comment>
<organism>
    <name type="scientific">Yersinia pestis (strain Pestoides F)</name>
    <dbReference type="NCBI Taxonomy" id="386656"/>
    <lineage>
        <taxon>Bacteria</taxon>
        <taxon>Pseudomonadati</taxon>
        <taxon>Pseudomonadota</taxon>
        <taxon>Gammaproteobacteria</taxon>
        <taxon>Enterobacterales</taxon>
        <taxon>Yersiniaceae</taxon>
        <taxon>Yersinia</taxon>
    </lineage>
</organism>
<gene>
    <name evidence="1" type="primary">gpmB</name>
    <name type="ordered locus">YPDSF_3179</name>
</gene>
<feature type="chain" id="PRO_1000064138" description="Probable phosphoglycerate mutase GpmB">
    <location>
        <begin position="1"/>
        <end position="215"/>
    </location>
</feature>
<feature type="active site" description="Tele-phosphohistidine intermediate" evidence="1">
    <location>
        <position position="9"/>
    </location>
</feature>
<feature type="active site" description="Proton donor/acceptor" evidence="1">
    <location>
        <position position="82"/>
    </location>
</feature>
<feature type="binding site" evidence="1">
    <location>
        <begin position="8"/>
        <end position="15"/>
    </location>
    <ligand>
        <name>substrate</name>
    </ligand>
</feature>
<feature type="binding site" evidence="1">
    <location>
        <begin position="21"/>
        <end position="22"/>
    </location>
    <ligand>
        <name>substrate</name>
    </ligand>
</feature>
<feature type="binding site" evidence="1">
    <location>
        <position position="58"/>
    </location>
    <ligand>
        <name>substrate</name>
    </ligand>
</feature>
<feature type="binding site" evidence="1">
    <location>
        <begin position="82"/>
        <end position="85"/>
    </location>
    <ligand>
        <name>substrate</name>
    </ligand>
</feature>
<feature type="binding site" evidence="1">
    <location>
        <begin position="151"/>
        <end position="152"/>
    </location>
    <ligand>
        <name>substrate</name>
    </ligand>
</feature>
<feature type="site" description="Transition state stabilizer" evidence="1">
    <location>
        <position position="150"/>
    </location>
</feature>
<sequence length="215" mass="23829">MLQVYLVRHGETLWNAARRIQGQSDSPLTEIGIRQAHLVAQRVRNQGITHIISSDLGRTQQTAKIIADACGLTMVTDPRLRELNMGVLENRPIDSLTPEEEQWRKQMVNGTEGARIPEGESMTELGRRMHAALDSCLELPAGSKPLLVSHGMALGCLLSTLLGLPAHAERRLRLRNCSLSRVDYQESPWLASGWVIESAGDTAHLDMPALDELQR</sequence>
<evidence type="ECO:0000255" key="1">
    <source>
        <dbReference type="HAMAP-Rule" id="MF_01040"/>
    </source>
</evidence>
<dbReference type="EC" id="5.4.2.-" evidence="1"/>
<dbReference type="EMBL" id="CP000668">
    <property type="protein sequence ID" value="ABP41537.1"/>
    <property type="molecule type" value="Genomic_DNA"/>
</dbReference>
<dbReference type="RefSeq" id="WP_002209230.1">
    <property type="nucleotide sequence ID" value="NZ_CP009715.1"/>
</dbReference>
<dbReference type="SMR" id="A4TQH5"/>
<dbReference type="GeneID" id="57974154"/>
<dbReference type="KEGG" id="ypp:YPDSF_3179"/>
<dbReference type="PATRIC" id="fig|386656.14.peg.1168"/>
<dbReference type="UniPathway" id="UPA00109">
    <property type="reaction ID" value="UER00186"/>
</dbReference>
<dbReference type="GO" id="GO:0005737">
    <property type="term" value="C:cytoplasm"/>
    <property type="evidence" value="ECO:0007669"/>
    <property type="project" value="TreeGrafter"/>
</dbReference>
<dbReference type="GO" id="GO:0016791">
    <property type="term" value="F:phosphatase activity"/>
    <property type="evidence" value="ECO:0007669"/>
    <property type="project" value="TreeGrafter"/>
</dbReference>
<dbReference type="GO" id="GO:0004619">
    <property type="term" value="F:phosphoglycerate mutase activity"/>
    <property type="evidence" value="ECO:0007669"/>
    <property type="project" value="UniProtKB-UniRule"/>
</dbReference>
<dbReference type="GO" id="GO:0006096">
    <property type="term" value="P:glycolytic process"/>
    <property type="evidence" value="ECO:0007669"/>
    <property type="project" value="UniProtKB-UniRule"/>
</dbReference>
<dbReference type="CDD" id="cd07067">
    <property type="entry name" value="HP_PGM_like"/>
    <property type="match status" value="1"/>
</dbReference>
<dbReference type="Gene3D" id="3.40.50.1240">
    <property type="entry name" value="Phosphoglycerate mutase-like"/>
    <property type="match status" value="1"/>
</dbReference>
<dbReference type="HAMAP" id="MF_01040">
    <property type="entry name" value="PGAM_GpmB"/>
    <property type="match status" value="1"/>
</dbReference>
<dbReference type="InterPro" id="IPR013078">
    <property type="entry name" value="His_Pase_superF_clade-1"/>
</dbReference>
<dbReference type="InterPro" id="IPR029033">
    <property type="entry name" value="His_PPase_superfam"/>
</dbReference>
<dbReference type="InterPro" id="IPR001345">
    <property type="entry name" value="PG/BPGM_mutase_AS"/>
</dbReference>
<dbReference type="InterPro" id="IPR050275">
    <property type="entry name" value="PGM_Phosphatase"/>
</dbReference>
<dbReference type="InterPro" id="IPR023086">
    <property type="entry name" value="Phosphoglycerate_mutase_GpmB"/>
</dbReference>
<dbReference type="NCBIfam" id="NF002901">
    <property type="entry name" value="PRK03482.1"/>
    <property type="match status" value="1"/>
</dbReference>
<dbReference type="PANTHER" id="PTHR48100">
    <property type="entry name" value="BROAD-SPECIFICITY PHOSPHATASE YOR283W-RELATED"/>
    <property type="match status" value="1"/>
</dbReference>
<dbReference type="PANTHER" id="PTHR48100:SF1">
    <property type="entry name" value="HISTIDINE PHOSPHATASE FAMILY PROTEIN-RELATED"/>
    <property type="match status" value="1"/>
</dbReference>
<dbReference type="Pfam" id="PF00300">
    <property type="entry name" value="His_Phos_1"/>
    <property type="match status" value="1"/>
</dbReference>
<dbReference type="SMART" id="SM00855">
    <property type="entry name" value="PGAM"/>
    <property type="match status" value="1"/>
</dbReference>
<dbReference type="SUPFAM" id="SSF53254">
    <property type="entry name" value="Phosphoglycerate mutase-like"/>
    <property type="match status" value="1"/>
</dbReference>
<dbReference type="PROSITE" id="PS00175">
    <property type="entry name" value="PG_MUTASE"/>
    <property type="match status" value="1"/>
</dbReference>
<name>GPMB_YERPP</name>
<keyword id="KW-0324">Glycolysis</keyword>
<keyword id="KW-0413">Isomerase</keyword>
<protein>
    <recommendedName>
        <fullName evidence="1">Probable phosphoglycerate mutase GpmB</fullName>
        <ecNumber evidence="1">5.4.2.-</ecNumber>
    </recommendedName>
    <alternativeName>
        <fullName evidence="1">PGAM</fullName>
    </alternativeName>
    <alternativeName>
        <fullName evidence="1">Phosphoglyceromutase</fullName>
    </alternativeName>
</protein>
<accession>A4TQH5</accession>
<proteinExistence type="inferred from homology"/>